<evidence type="ECO:0000255" key="1">
    <source>
        <dbReference type="HAMAP-Rule" id="MF_01333"/>
    </source>
</evidence>
<evidence type="ECO:0000305" key="2"/>
<accession>Q1JE46</accession>
<sequence>MANRLKEKYTNEVIPALTEKFNYTSVMAVPKVEKIVLNMGVGDAVSNAKNLEKAAAELALISGQKPLITKAKKSIAGFRLREGVAIGAKVTLRGERMYEFLDKLVSVSLPRVRDFHGVPTKSFDGRGNYTLGVKEQLIFPEISFDDVDKVRGLDIVIVTTANTDEESRELLKGLGMPFAK</sequence>
<proteinExistence type="inferred from homology"/>
<name>RL5_STRPB</name>
<protein>
    <recommendedName>
        <fullName evidence="1">Large ribosomal subunit protein uL5</fullName>
    </recommendedName>
    <alternativeName>
        <fullName evidence="2">50S ribosomal protein L5</fullName>
    </alternativeName>
</protein>
<feature type="chain" id="PRO_1000052839" description="Large ribosomal subunit protein uL5">
    <location>
        <begin position="1"/>
        <end position="180"/>
    </location>
</feature>
<gene>
    <name evidence="1" type="primary">rplE</name>
    <name type="ordered locus">MGAS2096_Spy0060</name>
</gene>
<reference key="1">
    <citation type="journal article" date="2006" name="Proc. Natl. Acad. Sci. U.S.A.">
        <title>Molecular genetic anatomy of inter- and intraserotype variation in the human bacterial pathogen group A Streptococcus.</title>
        <authorList>
            <person name="Beres S.B."/>
            <person name="Richter E.W."/>
            <person name="Nagiec M.J."/>
            <person name="Sumby P."/>
            <person name="Porcella S.F."/>
            <person name="DeLeo F.R."/>
            <person name="Musser J.M."/>
        </authorList>
    </citation>
    <scope>NUCLEOTIDE SEQUENCE [LARGE SCALE GENOMIC DNA]</scope>
    <source>
        <strain>MGAS2096</strain>
    </source>
</reference>
<organism>
    <name type="scientific">Streptococcus pyogenes serotype M12 (strain MGAS2096)</name>
    <dbReference type="NCBI Taxonomy" id="370553"/>
    <lineage>
        <taxon>Bacteria</taxon>
        <taxon>Bacillati</taxon>
        <taxon>Bacillota</taxon>
        <taxon>Bacilli</taxon>
        <taxon>Lactobacillales</taxon>
        <taxon>Streptococcaceae</taxon>
        <taxon>Streptococcus</taxon>
    </lineage>
</organism>
<comment type="function">
    <text evidence="1">This is one of the proteins that bind and probably mediate the attachment of the 5S RNA into the large ribosomal subunit, where it forms part of the central protuberance. In the 70S ribosome it contacts protein S13 of the 30S subunit (bridge B1b), connecting the 2 subunits; this bridge is implicated in subunit movement. Contacts the P site tRNA; the 5S rRNA and some of its associated proteins might help stabilize positioning of ribosome-bound tRNAs.</text>
</comment>
<comment type="subunit">
    <text evidence="1">Part of the 50S ribosomal subunit; part of the 5S rRNA/L5/L18/L25 subcomplex. Contacts the 5S rRNA and the P site tRNA. Forms a bridge to the 30S subunit in the 70S ribosome.</text>
</comment>
<comment type="similarity">
    <text evidence="1">Belongs to the universal ribosomal protein uL5 family.</text>
</comment>
<keyword id="KW-0687">Ribonucleoprotein</keyword>
<keyword id="KW-0689">Ribosomal protein</keyword>
<keyword id="KW-0694">RNA-binding</keyword>
<keyword id="KW-0699">rRNA-binding</keyword>
<keyword id="KW-0820">tRNA-binding</keyword>
<dbReference type="EMBL" id="CP000261">
    <property type="protein sequence ID" value="ABF35112.1"/>
    <property type="molecule type" value="Genomic_DNA"/>
</dbReference>
<dbReference type="SMR" id="Q1JE46"/>
<dbReference type="KEGG" id="spj:MGAS2096_Spy0060"/>
<dbReference type="HOGENOM" id="CLU_061015_2_1_9"/>
<dbReference type="GO" id="GO:1990904">
    <property type="term" value="C:ribonucleoprotein complex"/>
    <property type="evidence" value="ECO:0007669"/>
    <property type="project" value="UniProtKB-KW"/>
</dbReference>
<dbReference type="GO" id="GO:0005840">
    <property type="term" value="C:ribosome"/>
    <property type="evidence" value="ECO:0007669"/>
    <property type="project" value="UniProtKB-KW"/>
</dbReference>
<dbReference type="GO" id="GO:0019843">
    <property type="term" value="F:rRNA binding"/>
    <property type="evidence" value="ECO:0007669"/>
    <property type="project" value="UniProtKB-UniRule"/>
</dbReference>
<dbReference type="GO" id="GO:0003735">
    <property type="term" value="F:structural constituent of ribosome"/>
    <property type="evidence" value="ECO:0007669"/>
    <property type="project" value="InterPro"/>
</dbReference>
<dbReference type="GO" id="GO:0000049">
    <property type="term" value="F:tRNA binding"/>
    <property type="evidence" value="ECO:0007669"/>
    <property type="project" value="UniProtKB-UniRule"/>
</dbReference>
<dbReference type="GO" id="GO:0006412">
    <property type="term" value="P:translation"/>
    <property type="evidence" value="ECO:0007669"/>
    <property type="project" value="UniProtKB-UniRule"/>
</dbReference>
<dbReference type="FunFam" id="3.30.1440.10:FF:000001">
    <property type="entry name" value="50S ribosomal protein L5"/>
    <property type="match status" value="1"/>
</dbReference>
<dbReference type="Gene3D" id="3.30.1440.10">
    <property type="match status" value="1"/>
</dbReference>
<dbReference type="HAMAP" id="MF_01333_B">
    <property type="entry name" value="Ribosomal_uL5_B"/>
    <property type="match status" value="1"/>
</dbReference>
<dbReference type="InterPro" id="IPR002132">
    <property type="entry name" value="Ribosomal_uL5"/>
</dbReference>
<dbReference type="InterPro" id="IPR020930">
    <property type="entry name" value="Ribosomal_uL5_bac-type"/>
</dbReference>
<dbReference type="InterPro" id="IPR031309">
    <property type="entry name" value="Ribosomal_uL5_C"/>
</dbReference>
<dbReference type="InterPro" id="IPR020929">
    <property type="entry name" value="Ribosomal_uL5_CS"/>
</dbReference>
<dbReference type="InterPro" id="IPR022803">
    <property type="entry name" value="Ribosomal_uL5_dom_sf"/>
</dbReference>
<dbReference type="InterPro" id="IPR031310">
    <property type="entry name" value="Ribosomal_uL5_N"/>
</dbReference>
<dbReference type="NCBIfam" id="NF000585">
    <property type="entry name" value="PRK00010.1"/>
    <property type="match status" value="1"/>
</dbReference>
<dbReference type="PANTHER" id="PTHR11994">
    <property type="entry name" value="60S RIBOSOMAL PROTEIN L11-RELATED"/>
    <property type="match status" value="1"/>
</dbReference>
<dbReference type="Pfam" id="PF00281">
    <property type="entry name" value="Ribosomal_L5"/>
    <property type="match status" value="1"/>
</dbReference>
<dbReference type="Pfam" id="PF00673">
    <property type="entry name" value="Ribosomal_L5_C"/>
    <property type="match status" value="1"/>
</dbReference>
<dbReference type="PIRSF" id="PIRSF002161">
    <property type="entry name" value="Ribosomal_L5"/>
    <property type="match status" value="1"/>
</dbReference>
<dbReference type="SUPFAM" id="SSF55282">
    <property type="entry name" value="RL5-like"/>
    <property type="match status" value="1"/>
</dbReference>
<dbReference type="PROSITE" id="PS00358">
    <property type="entry name" value="RIBOSOMAL_L5"/>
    <property type="match status" value="1"/>
</dbReference>